<proteinExistence type="inferred from homology"/>
<gene>
    <name evidence="1" type="primary">tsf</name>
    <name type="ordered locus">XCC1374</name>
</gene>
<sequence>MEITASLVKELRERTGAGMMECKKALVENAGDIDAAAEWLRKSGLAKADKKADRVAAEGRIATAQAGGKAVLVEVNSETDFVAKDENFLAFTDVVANAALNSDATDADALKSVKLDSGETIEERRAAVIAKVGENLQVRRLVRIDSANNVAAYVHGGRIGVLVELKGGDAELARGIAMHIAAMNPPHVKASDVPAEFVAKEKEIELAKMSEKDKAKPAEILEKIISGKISKIVNEVTLYGQPYVLNTDQTVEQAVKAAGAEVIGFQRLAVGEGIEKVVEDYAAEVMKQAGLA</sequence>
<protein>
    <recommendedName>
        <fullName evidence="1">Elongation factor Ts</fullName>
        <shortName evidence="1">EF-Ts</shortName>
    </recommendedName>
</protein>
<name>EFTS_XANCP</name>
<keyword id="KW-0963">Cytoplasm</keyword>
<keyword id="KW-0251">Elongation factor</keyword>
<keyword id="KW-0648">Protein biosynthesis</keyword>
<keyword id="KW-1185">Reference proteome</keyword>
<evidence type="ECO:0000255" key="1">
    <source>
        <dbReference type="HAMAP-Rule" id="MF_00050"/>
    </source>
</evidence>
<evidence type="ECO:0000305" key="2"/>
<reference key="1">
    <citation type="journal article" date="2002" name="Nature">
        <title>Comparison of the genomes of two Xanthomonas pathogens with differing host specificities.</title>
        <authorList>
            <person name="da Silva A.C.R."/>
            <person name="Ferro J.A."/>
            <person name="Reinach F.C."/>
            <person name="Farah C.S."/>
            <person name="Furlan L.R."/>
            <person name="Quaggio R.B."/>
            <person name="Monteiro-Vitorello C.B."/>
            <person name="Van Sluys M.A."/>
            <person name="Almeida N.F. Jr."/>
            <person name="Alves L.M.C."/>
            <person name="do Amaral A.M."/>
            <person name="Bertolini M.C."/>
            <person name="Camargo L.E.A."/>
            <person name="Camarotte G."/>
            <person name="Cannavan F."/>
            <person name="Cardozo J."/>
            <person name="Chambergo F."/>
            <person name="Ciapina L.P."/>
            <person name="Cicarelli R.M.B."/>
            <person name="Coutinho L.L."/>
            <person name="Cursino-Santos J.R."/>
            <person name="El-Dorry H."/>
            <person name="Faria J.B."/>
            <person name="Ferreira A.J.S."/>
            <person name="Ferreira R.C.C."/>
            <person name="Ferro M.I.T."/>
            <person name="Formighieri E.F."/>
            <person name="Franco M.C."/>
            <person name="Greggio C.C."/>
            <person name="Gruber A."/>
            <person name="Katsuyama A.M."/>
            <person name="Kishi L.T."/>
            <person name="Leite R.P."/>
            <person name="Lemos E.G.M."/>
            <person name="Lemos M.V.F."/>
            <person name="Locali E.C."/>
            <person name="Machado M.A."/>
            <person name="Madeira A.M.B.N."/>
            <person name="Martinez-Rossi N.M."/>
            <person name="Martins E.C."/>
            <person name="Meidanis J."/>
            <person name="Menck C.F.M."/>
            <person name="Miyaki C.Y."/>
            <person name="Moon D.H."/>
            <person name="Moreira L.M."/>
            <person name="Novo M.T.M."/>
            <person name="Okura V.K."/>
            <person name="Oliveira M.C."/>
            <person name="Oliveira V.R."/>
            <person name="Pereira H.A."/>
            <person name="Rossi A."/>
            <person name="Sena J.A.D."/>
            <person name="Silva C."/>
            <person name="de Souza R.F."/>
            <person name="Spinola L.A.F."/>
            <person name="Takita M.A."/>
            <person name="Tamura R.E."/>
            <person name="Teixeira E.C."/>
            <person name="Tezza R.I.D."/>
            <person name="Trindade dos Santos M."/>
            <person name="Truffi D."/>
            <person name="Tsai S.M."/>
            <person name="White F.F."/>
            <person name="Setubal J.C."/>
            <person name="Kitajima J.P."/>
        </authorList>
    </citation>
    <scope>NUCLEOTIDE SEQUENCE [LARGE SCALE GENOMIC DNA]</scope>
    <source>
        <strain>ATCC 33913 / DSM 3586 / NCPPB 528 / LMG 568 / P 25</strain>
    </source>
</reference>
<comment type="function">
    <text evidence="1">Associates with the EF-Tu.GDP complex and induces the exchange of GDP to GTP. It remains bound to the aminoacyl-tRNA.EF-Tu.GTP complex up to the GTP hydrolysis stage on the ribosome.</text>
</comment>
<comment type="subcellular location">
    <subcellularLocation>
        <location evidence="1">Cytoplasm</location>
    </subcellularLocation>
</comment>
<comment type="similarity">
    <text evidence="1">Belongs to the EF-Ts family.</text>
</comment>
<comment type="sequence caution" evidence="2">
    <conflict type="erroneous initiation">
        <sequence resource="EMBL-CDS" id="AAM40672"/>
    </conflict>
</comment>
<feature type="chain" id="PRO_0000161237" description="Elongation factor Ts">
    <location>
        <begin position="1"/>
        <end position="292"/>
    </location>
</feature>
<feature type="region of interest" description="Involved in Mg(2+) ion dislocation from EF-Tu" evidence="1">
    <location>
        <begin position="79"/>
        <end position="82"/>
    </location>
</feature>
<organism>
    <name type="scientific">Xanthomonas campestris pv. campestris (strain ATCC 33913 / DSM 3586 / NCPPB 528 / LMG 568 / P 25)</name>
    <dbReference type="NCBI Taxonomy" id="190485"/>
    <lineage>
        <taxon>Bacteria</taxon>
        <taxon>Pseudomonadati</taxon>
        <taxon>Pseudomonadota</taxon>
        <taxon>Gammaproteobacteria</taxon>
        <taxon>Lysobacterales</taxon>
        <taxon>Lysobacteraceae</taxon>
        <taxon>Xanthomonas</taxon>
    </lineage>
</organism>
<dbReference type="EMBL" id="AE008922">
    <property type="protein sequence ID" value="AAM40672.1"/>
    <property type="status" value="ALT_INIT"/>
    <property type="molecule type" value="Genomic_DNA"/>
</dbReference>
<dbReference type="RefSeq" id="NP_636748.2">
    <property type="nucleotide sequence ID" value="NC_003902.1"/>
</dbReference>
<dbReference type="RefSeq" id="WP_011036566.1">
    <property type="nucleotide sequence ID" value="NC_003902.1"/>
</dbReference>
<dbReference type="SMR" id="Q8PAV3"/>
<dbReference type="STRING" id="190485.XCC1374"/>
<dbReference type="EnsemblBacteria" id="AAM40672">
    <property type="protein sequence ID" value="AAM40672"/>
    <property type="gene ID" value="XCC1374"/>
</dbReference>
<dbReference type="KEGG" id="xcc:XCC1374"/>
<dbReference type="PATRIC" id="fig|190485.4.peg.1476"/>
<dbReference type="eggNOG" id="COG0264">
    <property type="taxonomic scope" value="Bacteria"/>
</dbReference>
<dbReference type="HOGENOM" id="CLU_047155_0_0_6"/>
<dbReference type="OrthoDB" id="9808348at2"/>
<dbReference type="Proteomes" id="UP000001010">
    <property type="component" value="Chromosome"/>
</dbReference>
<dbReference type="GO" id="GO:0005737">
    <property type="term" value="C:cytoplasm"/>
    <property type="evidence" value="ECO:0007669"/>
    <property type="project" value="UniProtKB-SubCell"/>
</dbReference>
<dbReference type="GO" id="GO:0003746">
    <property type="term" value="F:translation elongation factor activity"/>
    <property type="evidence" value="ECO:0000318"/>
    <property type="project" value="GO_Central"/>
</dbReference>
<dbReference type="GO" id="GO:0006414">
    <property type="term" value="P:translational elongation"/>
    <property type="evidence" value="ECO:0000318"/>
    <property type="project" value="GO_Central"/>
</dbReference>
<dbReference type="CDD" id="cd14275">
    <property type="entry name" value="UBA_EF-Ts"/>
    <property type="match status" value="1"/>
</dbReference>
<dbReference type="FunFam" id="1.10.286.20:FF:000001">
    <property type="entry name" value="Elongation factor Ts"/>
    <property type="match status" value="1"/>
</dbReference>
<dbReference type="FunFam" id="1.10.8.10:FF:000001">
    <property type="entry name" value="Elongation factor Ts"/>
    <property type="match status" value="1"/>
</dbReference>
<dbReference type="FunFam" id="3.30.479.20:FF:000001">
    <property type="entry name" value="Elongation factor Ts"/>
    <property type="match status" value="1"/>
</dbReference>
<dbReference type="Gene3D" id="1.10.286.20">
    <property type="match status" value="1"/>
</dbReference>
<dbReference type="Gene3D" id="1.10.8.10">
    <property type="entry name" value="DNA helicase RuvA subunit, C-terminal domain"/>
    <property type="match status" value="1"/>
</dbReference>
<dbReference type="Gene3D" id="3.30.479.20">
    <property type="entry name" value="Elongation factor Ts, dimerisation domain"/>
    <property type="match status" value="2"/>
</dbReference>
<dbReference type="HAMAP" id="MF_00050">
    <property type="entry name" value="EF_Ts"/>
    <property type="match status" value="1"/>
</dbReference>
<dbReference type="InterPro" id="IPR036402">
    <property type="entry name" value="EF-Ts_dimer_sf"/>
</dbReference>
<dbReference type="InterPro" id="IPR001816">
    <property type="entry name" value="Transl_elong_EFTs/EF1B"/>
</dbReference>
<dbReference type="InterPro" id="IPR014039">
    <property type="entry name" value="Transl_elong_EFTs/EF1B_dimer"/>
</dbReference>
<dbReference type="InterPro" id="IPR018101">
    <property type="entry name" value="Transl_elong_Ts_CS"/>
</dbReference>
<dbReference type="InterPro" id="IPR009060">
    <property type="entry name" value="UBA-like_sf"/>
</dbReference>
<dbReference type="NCBIfam" id="TIGR00116">
    <property type="entry name" value="tsf"/>
    <property type="match status" value="1"/>
</dbReference>
<dbReference type="PANTHER" id="PTHR11741">
    <property type="entry name" value="ELONGATION FACTOR TS"/>
    <property type="match status" value="1"/>
</dbReference>
<dbReference type="PANTHER" id="PTHR11741:SF0">
    <property type="entry name" value="ELONGATION FACTOR TS, MITOCHONDRIAL"/>
    <property type="match status" value="1"/>
</dbReference>
<dbReference type="Pfam" id="PF00889">
    <property type="entry name" value="EF_TS"/>
    <property type="match status" value="1"/>
</dbReference>
<dbReference type="SUPFAM" id="SSF54713">
    <property type="entry name" value="Elongation factor Ts (EF-Ts), dimerisation domain"/>
    <property type="match status" value="2"/>
</dbReference>
<dbReference type="SUPFAM" id="SSF46934">
    <property type="entry name" value="UBA-like"/>
    <property type="match status" value="1"/>
</dbReference>
<dbReference type="PROSITE" id="PS01126">
    <property type="entry name" value="EF_TS_1"/>
    <property type="match status" value="1"/>
</dbReference>
<dbReference type="PROSITE" id="PS01127">
    <property type="entry name" value="EF_TS_2"/>
    <property type="match status" value="1"/>
</dbReference>
<accession>Q8PAV3</accession>